<feature type="chain" id="PRO_0000380515" description="DNA ligase">
    <location>
        <begin position="1"/>
        <end position="670"/>
    </location>
</feature>
<feature type="domain" description="BRCT" evidence="1">
    <location>
        <begin position="592"/>
        <end position="670"/>
    </location>
</feature>
<feature type="active site" description="N6-AMP-lysine intermediate" evidence="1">
    <location>
        <position position="115"/>
    </location>
</feature>
<feature type="binding site" evidence="1">
    <location>
        <begin position="32"/>
        <end position="36"/>
    </location>
    <ligand>
        <name>NAD(+)</name>
        <dbReference type="ChEBI" id="CHEBI:57540"/>
    </ligand>
</feature>
<feature type="binding site" evidence="1">
    <location>
        <begin position="81"/>
        <end position="82"/>
    </location>
    <ligand>
        <name>NAD(+)</name>
        <dbReference type="ChEBI" id="CHEBI:57540"/>
    </ligand>
</feature>
<feature type="binding site" evidence="1">
    <location>
        <position position="113"/>
    </location>
    <ligand>
        <name>NAD(+)</name>
        <dbReference type="ChEBI" id="CHEBI:57540"/>
    </ligand>
</feature>
<feature type="binding site" evidence="1">
    <location>
        <position position="136"/>
    </location>
    <ligand>
        <name>NAD(+)</name>
        <dbReference type="ChEBI" id="CHEBI:57540"/>
    </ligand>
</feature>
<feature type="binding site" evidence="1">
    <location>
        <position position="173"/>
    </location>
    <ligand>
        <name>NAD(+)</name>
        <dbReference type="ChEBI" id="CHEBI:57540"/>
    </ligand>
</feature>
<feature type="binding site" evidence="1">
    <location>
        <position position="290"/>
    </location>
    <ligand>
        <name>NAD(+)</name>
        <dbReference type="ChEBI" id="CHEBI:57540"/>
    </ligand>
</feature>
<feature type="binding site" evidence="1">
    <location>
        <position position="314"/>
    </location>
    <ligand>
        <name>NAD(+)</name>
        <dbReference type="ChEBI" id="CHEBI:57540"/>
    </ligand>
</feature>
<feature type="binding site" evidence="1">
    <location>
        <position position="408"/>
    </location>
    <ligand>
        <name>Zn(2+)</name>
        <dbReference type="ChEBI" id="CHEBI:29105"/>
    </ligand>
</feature>
<feature type="binding site" evidence="1">
    <location>
        <position position="411"/>
    </location>
    <ligand>
        <name>Zn(2+)</name>
        <dbReference type="ChEBI" id="CHEBI:29105"/>
    </ligand>
</feature>
<feature type="binding site" evidence="1">
    <location>
        <position position="426"/>
    </location>
    <ligand>
        <name>Zn(2+)</name>
        <dbReference type="ChEBI" id="CHEBI:29105"/>
    </ligand>
</feature>
<feature type="binding site" evidence="1">
    <location>
        <position position="432"/>
    </location>
    <ligand>
        <name>Zn(2+)</name>
        <dbReference type="ChEBI" id="CHEBI:29105"/>
    </ligand>
</feature>
<comment type="function">
    <text evidence="1">DNA ligase that catalyzes the formation of phosphodiester linkages between 5'-phosphoryl and 3'-hydroxyl groups in double-stranded DNA using NAD as a coenzyme and as the energy source for the reaction. It is essential for DNA replication and repair of damaged DNA.</text>
</comment>
<comment type="catalytic activity">
    <reaction evidence="1">
        <text>NAD(+) + (deoxyribonucleotide)n-3'-hydroxyl + 5'-phospho-(deoxyribonucleotide)m = (deoxyribonucleotide)n+m + AMP + beta-nicotinamide D-nucleotide.</text>
        <dbReference type="EC" id="6.5.1.2"/>
    </reaction>
</comment>
<comment type="cofactor">
    <cofactor evidence="1">
        <name>Mg(2+)</name>
        <dbReference type="ChEBI" id="CHEBI:18420"/>
    </cofactor>
    <cofactor evidence="1">
        <name>Mn(2+)</name>
        <dbReference type="ChEBI" id="CHEBI:29035"/>
    </cofactor>
</comment>
<comment type="similarity">
    <text evidence="1">Belongs to the NAD-dependent DNA ligase family. LigA subfamily.</text>
</comment>
<reference key="1">
    <citation type="submission" date="2008-02" db="EMBL/GenBank/DDBJ databases">
        <title>Complete sequence of Yersinia pseudotuberculosis YPIII.</title>
        <authorList>
            <consortium name="US DOE Joint Genome Institute"/>
            <person name="Copeland A."/>
            <person name="Lucas S."/>
            <person name="Lapidus A."/>
            <person name="Glavina del Rio T."/>
            <person name="Dalin E."/>
            <person name="Tice H."/>
            <person name="Bruce D."/>
            <person name="Goodwin L."/>
            <person name="Pitluck S."/>
            <person name="Munk A.C."/>
            <person name="Brettin T."/>
            <person name="Detter J.C."/>
            <person name="Han C."/>
            <person name="Tapia R."/>
            <person name="Schmutz J."/>
            <person name="Larimer F."/>
            <person name="Land M."/>
            <person name="Hauser L."/>
            <person name="Challacombe J.F."/>
            <person name="Green L."/>
            <person name="Lindler L.E."/>
            <person name="Nikolich M.P."/>
            <person name="Richardson P."/>
        </authorList>
    </citation>
    <scope>NUCLEOTIDE SEQUENCE [LARGE SCALE GENOMIC DNA]</scope>
    <source>
        <strain>YPIII</strain>
    </source>
</reference>
<name>DNLJ_YERPY</name>
<dbReference type="EC" id="6.5.1.2" evidence="1"/>
<dbReference type="EMBL" id="CP000950">
    <property type="protein sequence ID" value="ACA67726.1"/>
    <property type="molecule type" value="Genomic_DNA"/>
</dbReference>
<dbReference type="RefSeq" id="WP_012104854.1">
    <property type="nucleotide sequence ID" value="NZ_CP009792.1"/>
</dbReference>
<dbReference type="SMR" id="B1JFZ0"/>
<dbReference type="KEGG" id="ypy:YPK_1432"/>
<dbReference type="PATRIC" id="fig|502800.11.peg.2070"/>
<dbReference type="GO" id="GO:0005829">
    <property type="term" value="C:cytosol"/>
    <property type="evidence" value="ECO:0007669"/>
    <property type="project" value="TreeGrafter"/>
</dbReference>
<dbReference type="GO" id="GO:0003677">
    <property type="term" value="F:DNA binding"/>
    <property type="evidence" value="ECO:0007669"/>
    <property type="project" value="InterPro"/>
</dbReference>
<dbReference type="GO" id="GO:0003911">
    <property type="term" value="F:DNA ligase (NAD+) activity"/>
    <property type="evidence" value="ECO:0007669"/>
    <property type="project" value="UniProtKB-UniRule"/>
</dbReference>
<dbReference type="GO" id="GO:0046872">
    <property type="term" value="F:metal ion binding"/>
    <property type="evidence" value="ECO:0007669"/>
    <property type="project" value="UniProtKB-KW"/>
</dbReference>
<dbReference type="GO" id="GO:0006281">
    <property type="term" value="P:DNA repair"/>
    <property type="evidence" value="ECO:0007669"/>
    <property type="project" value="UniProtKB-KW"/>
</dbReference>
<dbReference type="GO" id="GO:0006260">
    <property type="term" value="P:DNA replication"/>
    <property type="evidence" value="ECO:0007669"/>
    <property type="project" value="UniProtKB-KW"/>
</dbReference>
<dbReference type="CDD" id="cd17748">
    <property type="entry name" value="BRCT_DNA_ligase_like"/>
    <property type="match status" value="1"/>
</dbReference>
<dbReference type="CDD" id="cd00114">
    <property type="entry name" value="LIGANc"/>
    <property type="match status" value="1"/>
</dbReference>
<dbReference type="FunFam" id="1.10.150.20:FF:000006">
    <property type="entry name" value="DNA ligase"/>
    <property type="match status" value="1"/>
</dbReference>
<dbReference type="FunFam" id="1.10.150.20:FF:000007">
    <property type="entry name" value="DNA ligase"/>
    <property type="match status" value="1"/>
</dbReference>
<dbReference type="FunFam" id="1.10.287.610:FF:000002">
    <property type="entry name" value="DNA ligase"/>
    <property type="match status" value="1"/>
</dbReference>
<dbReference type="FunFam" id="2.40.50.140:FF:000012">
    <property type="entry name" value="DNA ligase"/>
    <property type="match status" value="1"/>
</dbReference>
<dbReference type="FunFam" id="3.30.470.30:FF:000001">
    <property type="entry name" value="DNA ligase"/>
    <property type="match status" value="1"/>
</dbReference>
<dbReference type="FunFam" id="3.40.50.10190:FF:000004">
    <property type="entry name" value="DNA ligase"/>
    <property type="match status" value="1"/>
</dbReference>
<dbReference type="FunFam" id="6.20.10.30:FF:000001">
    <property type="entry name" value="DNA ligase"/>
    <property type="match status" value="1"/>
</dbReference>
<dbReference type="Gene3D" id="6.20.10.30">
    <property type="match status" value="1"/>
</dbReference>
<dbReference type="Gene3D" id="1.10.150.20">
    <property type="entry name" value="5' to 3' exonuclease, C-terminal subdomain"/>
    <property type="match status" value="2"/>
</dbReference>
<dbReference type="Gene3D" id="3.40.50.10190">
    <property type="entry name" value="BRCT domain"/>
    <property type="match status" value="1"/>
</dbReference>
<dbReference type="Gene3D" id="3.30.470.30">
    <property type="entry name" value="DNA ligase/mRNA capping enzyme"/>
    <property type="match status" value="1"/>
</dbReference>
<dbReference type="Gene3D" id="1.10.287.610">
    <property type="entry name" value="Helix hairpin bin"/>
    <property type="match status" value="1"/>
</dbReference>
<dbReference type="Gene3D" id="2.40.50.140">
    <property type="entry name" value="Nucleic acid-binding proteins"/>
    <property type="match status" value="1"/>
</dbReference>
<dbReference type="HAMAP" id="MF_01588">
    <property type="entry name" value="DNA_ligase_A"/>
    <property type="match status" value="1"/>
</dbReference>
<dbReference type="InterPro" id="IPR001357">
    <property type="entry name" value="BRCT_dom"/>
</dbReference>
<dbReference type="InterPro" id="IPR036420">
    <property type="entry name" value="BRCT_dom_sf"/>
</dbReference>
<dbReference type="InterPro" id="IPR041663">
    <property type="entry name" value="DisA/LigA_HHH"/>
</dbReference>
<dbReference type="InterPro" id="IPR001679">
    <property type="entry name" value="DNA_ligase"/>
</dbReference>
<dbReference type="InterPro" id="IPR018239">
    <property type="entry name" value="DNA_ligase_AS"/>
</dbReference>
<dbReference type="InterPro" id="IPR033136">
    <property type="entry name" value="DNA_ligase_CS"/>
</dbReference>
<dbReference type="InterPro" id="IPR013839">
    <property type="entry name" value="DNAligase_adenylation"/>
</dbReference>
<dbReference type="InterPro" id="IPR013840">
    <property type="entry name" value="DNAligase_N"/>
</dbReference>
<dbReference type="InterPro" id="IPR003583">
    <property type="entry name" value="Hlx-hairpin-Hlx_DNA-bd_motif"/>
</dbReference>
<dbReference type="InterPro" id="IPR012340">
    <property type="entry name" value="NA-bd_OB-fold"/>
</dbReference>
<dbReference type="InterPro" id="IPR004150">
    <property type="entry name" value="NAD_DNA_ligase_OB"/>
</dbReference>
<dbReference type="InterPro" id="IPR010994">
    <property type="entry name" value="RuvA_2-like"/>
</dbReference>
<dbReference type="InterPro" id="IPR004149">
    <property type="entry name" value="Znf_DNAligase_C4"/>
</dbReference>
<dbReference type="NCBIfam" id="TIGR00575">
    <property type="entry name" value="dnlj"/>
    <property type="match status" value="1"/>
</dbReference>
<dbReference type="NCBIfam" id="NF005932">
    <property type="entry name" value="PRK07956.1"/>
    <property type="match status" value="1"/>
</dbReference>
<dbReference type="PANTHER" id="PTHR23389">
    <property type="entry name" value="CHROMOSOME TRANSMISSION FIDELITY FACTOR 18"/>
    <property type="match status" value="1"/>
</dbReference>
<dbReference type="PANTHER" id="PTHR23389:SF9">
    <property type="entry name" value="DNA LIGASE"/>
    <property type="match status" value="1"/>
</dbReference>
<dbReference type="Pfam" id="PF00533">
    <property type="entry name" value="BRCT"/>
    <property type="match status" value="1"/>
</dbReference>
<dbReference type="Pfam" id="PF01653">
    <property type="entry name" value="DNA_ligase_aden"/>
    <property type="match status" value="1"/>
</dbReference>
<dbReference type="Pfam" id="PF03120">
    <property type="entry name" value="DNA_ligase_OB"/>
    <property type="match status" value="1"/>
</dbReference>
<dbReference type="Pfam" id="PF03119">
    <property type="entry name" value="DNA_ligase_ZBD"/>
    <property type="match status" value="1"/>
</dbReference>
<dbReference type="Pfam" id="PF12826">
    <property type="entry name" value="HHH_2"/>
    <property type="match status" value="1"/>
</dbReference>
<dbReference type="Pfam" id="PF14520">
    <property type="entry name" value="HHH_5"/>
    <property type="match status" value="1"/>
</dbReference>
<dbReference type="Pfam" id="PF22745">
    <property type="entry name" value="Nlig-Ia"/>
    <property type="match status" value="1"/>
</dbReference>
<dbReference type="PIRSF" id="PIRSF001604">
    <property type="entry name" value="LigA"/>
    <property type="match status" value="1"/>
</dbReference>
<dbReference type="SMART" id="SM00292">
    <property type="entry name" value="BRCT"/>
    <property type="match status" value="1"/>
</dbReference>
<dbReference type="SMART" id="SM00278">
    <property type="entry name" value="HhH1"/>
    <property type="match status" value="4"/>
</dbReference>
<dbReference type="SMART" id="SM00532">
    <property type="entry name" value="LIGANc"/>
    <property type="match status" value="1"/>
</dbReference>
<dbReference type="SUPFAM" id="SSF52113">
    <property type="entry name" value="BRCT domain"/>
    <property type="match status" value="1"/>
</dbReference>
<dbReference type="SUPFAM" id="SSF56091">
    <property type="entry name" value="DNA ligase/mRNA capping enzyme, catalytic domain"/>
    <property type="match status" value="1"/>
</dbReference>
<dbReference type="SUPFAM" id="SSF50249">
    <property type="entry name" value="Nucleic acid-binding proteins"/>
    <property type="match status" value="1"/>
</dbReference>
<dbReference type="SUPFAM" id="SSF47781">
    <property type="entry name" value="RuvA domain 2-like"/>
    <property type="match status" value="1"/>
</dbReference>
<dbReference type="PROSITE" id="PS50172">
    <property type="entry name" value="BRCT"/>
    <property type="match status" value="1"/>
</dbReference>
<dbReference type="PROSITE" id="PS01055">
    <property type="entry name" value="DNA_LIGASE_N1"/>
    <property type="match status" value="1"/>
</dbReference>
<dbReference type="PROSITE" id="PS01056">
    <property type="entry name" value="DNA_LIGASE_N2"/>
    <property type="match status" value="1"/>
</dbReference>
<evidence type="ECO:0000255" key="1">
    <source>
        <dbReference type="HAMAP-Rule" id="MF_01588"/>
    </source>
</evidence>
<gene>
    <name evidence="1" type="primary">ligA</name>
    <name type="ordered locus">YPK_1432</name>
</gene>
<proteinExistence type="inferred from homology"/>
<keyword id="KW-0227">DNA damage</keyword>
<keyword id="KW-0234">DNA repair</keyword>
<keyword id="KW-0235">DNA replication</keyword>
<keyword id="KW-0436">Ligase</keyword>
<keyword id="KW-0460">Magnesium</keyword>
<keyword id="KW-0464">Manganese</keyword>
<keyword id="KW-0479">Metal-binding</keyword>
<keyword id="KW-0520">NAD</keyword>
<keyword id="KW-0862">Zinc</keyword>
<protein>
    <recommendedName>
        <fullName evidence="1">DNA ligase</fullName>
        <ecNumber evidence="1">6.5.1.2</ecNumber>
    </recommendedName>
    <alternativeName>
        <fullName evidence="1">Polydeoxyribonucleotide synthase [NAD(+)]</fullName>
    </alternativeName>
</protein>
<organism>
    <name type="scientific">Yersinia pseudotuberculosis serotype O:3 (strain YPIII)</name>
    <dbReference type="NCBI Taxonomy" id="502800"/>
    <lineage>
        <taxon>Bacteria</taxon>
        <taxon>Pseudomonadati</taxon>
        <taxon>Pseudomonadota</taxon>
        <taxon>Gammaproteobacteria</taxon>
        <taxon>Enterobacterales</taxon>
        <taxon>Yersiniaceae</taxon>
        <taxon>Yersinia</taxon>
    </lineage>
</organism>
<sequence length="670" mass="73953">MESIIQQINQLRTSLRHHEHQYHVLDAPEIPDAEYDRMMQQLRDLEAQHPELVTNDSPTQRVGAAPLDAFEQVEHEVPMLSLDNVFDEESYLAFDKRVHDRLKTAEPLTFCCELKLDGLAVSLLYENGELVRAATRGDGTTGENITANVRTIRAIPLRLHGDNVPRRVEVRGEVFMPQAGFEQLNEEARRKGGKVFANPRNAAAGSLRQLDPRITAKRPLTFFCYGVGLLDGGELPRSHIQCLMQFKAWGLPVSERVKLCTGSDQVIAFYRQIEQDRAGLGFDIDGVVIKVDDLVLQEQLGFVARAPRWATAFKFPAQEQITQVREVEFQVGRTGAITPVARLEPVQVAGVIVSNATLHNADEIERLGLRIGDTVIVRRAGDVIPQVVGVVMEQRPDDTKEITFPSQCPVCGSDIERVEGEAVARCTGGLFCAAQRKEALKHFVSRRALDVDGMGDKIIEQLVEKQYVENPADLFQLTAGKLTGLDRMGPKSAQNLIAALEKAKQTTFARFLYALGIREVGEATAANLAAHFRTLDNLRAADIETLKSVPDVGEVVAKHVMNFLSEEHNQKVIEELEKVVSWPEPQQIVVEEIDSPFAGKTVVLTGSLTILSRDEAKDRLTALGAKVSGSVSKKTHLVIAGEAAGSKLAKAQELGIKVIDEAEMIRLLGE</sequence>
<accession>B1JFZ0</accession>